<gene>
    <name type="primary">dagK</name>
    <name type="ordered locus">MT2312</name>
</gene>
<sequence length="309" mass="32805">MSAGQLRRHEIGKVTALTNPLSGHGAAVKAAHGAIARLKHRGVDVVEIVGGDAHDARHLLAAAVAKGTDAVMVTGGDGVVSNALQVLAGTDIPLGIIPAGTGNDHAREFGLPTKNPKAAADIVVDGWTETIDLGRIQDDNGIEKWFGTVAATGFDSLVNDRANRMRWPHGRMRYYIAMLAELSRLRPLPFRLVLDGTEEIVADLTLADFGNTRSYGGGLLICPNADHSDGLLDITMAQSDSRTKLLRLFPTIFKGAHVELDEVSTTRAKTVHVECPGINVYADGDFACPLPAEISAVPAALQVLRPRHG</sequence>
<organism>
    <name type="scientific">Mycobacterium tuberculosis (strain CDC 1551 / Oshkosh)</name>
    <dbReference type="NCBI Taxonomy" id="83331"/>
    <lineage>
        <taxon>Bacteria</taxon>
        <taxon>Bacillati</taxon>
        <taxon>Actinomycetota</taxon>
        <taxon>Actinomycetes</taxon>
        <taxon>Mycobacteriales</taxon>
        <taxon>Mycobacteriaceae</taxon>
        <taxon>Mycobacterium</taxon>
        <taxon>Mycobacterium tuberculosis complex</taxon>
    </lineage>
</organism>
<comment type="function">
    <text evidence="3">Catalyzes the phosphorylation of diacylglycerol (DAG) into phosphatidic acid. Is involved in the biosynthesis of phosphatidylinositol mannosides (PIMs), probably via a role in the biosynthesis of phosphatidylinositol (PI), a PIM precursor, which is derived from phosphatidic acid (PubMed:16689792). Is also able to phosphorylate other various amphipathic lipids of host and bacterial origin in vitro, such as ceramide (PubMed:16689792).</text>
</comment>
<comment type="catalytic activity">
    <reaction evidence="3">
        <text>a 1,2-diacyl-sn-glycerol + ATP = a 1,2-diacyl-sn-glycero-3-phosphate + ADP + H(+)</text>
        <dbReference type="Rhea" id="RHEA:10272"/>
        <dbReference type="ChEBI" id="CHEBI:15378"/>
        <dbReference type="ChEBI" id="CHEBI:17815"/>
        <dbReference type="ChEBI" id="CHEBI:30616"/>
        <dbReference type="ChEBI" id="CHEBI:58608"/>
        <dbReference type="ChEBI" id="CHEBI:456216"/>
        <dbReference type="EC" id="2.7.1.107"/>
    </reaction>
    <physiologicalReaction direction="left-to-right" evidence="3">
        <dbReference type="Rhea" id="RHEA:10273"/>
    </physiologicalReaction>
</comment>
<comment type="catalytic activity">
    <reaction evidence="3">
        <text>N-hexadecanoylsphing-4-enine + ATP = N-(hexadecanoyl)-sphing-4-enine-1-phosphate + ADP + H(+)</text>
        <dbReference type="Rhea" id="RHEA:46340"/>
        <dbReference type="ChEBI" id="CHEBI:15378"/>
        <dbReference type="ChEBI" id="CHEBI:30616"/>
        <dbReference type="ChEBI" id="CHEBI:72959"/>
        <dbReference type="ChEBI" id="CHEBI:72963"/>
        <dbReference type="ChEBI" id="CHEBI:456216"/>
    </reaction>
    <physiologicalReaction direction="left-to-right" evidence="3">
        <dbReference type="Rhea" id="RHEA:46341"/>
    </physiologicalReaction>
</comment>
<comment type="cofactor">
    <cofactor evidence="1">
        <name>Mg(2+)</name>
        <dbReference type="ChEBI" id="CHEBI:18420"/>
    </cofactor>
    <text evidence="1">Binds 1 Mg(2+) ion per subunit. This ion appears to have a structural role and is required for catalytic activity.</text>
</comment>
<comment type="subcellular location">
    <subcellularLocation>
        <location evidence="6">Secreted</location>
        <location evidence="6">Cell wall</location>
    </subcellularLocation>
</comment>
<comment type="disruption phenotype">
    <text evidence="3">Cells lacking this gene exhibit a disruption of the production of certain higher-order phosphatidylinositol mannosides (PIMs) species.</text>
</comment>
<comment type="similarity">
    <text evidence="5">Belongs to the diacylglycerol/lipid kinase family.</text>
</comment>
<comment type="sequence caution" evidence="5">
    <conflict type="frameshift">
        <sequence resource="EMBL" id="AE000516"/>
    </conflict>
</comment>
<accession>P9WP28</accession>
<accession>L0TAM7</accession>
<accession>O53526</accession>
<reference key="1">
    <citation type="journal article" date="2002" name="J. Bacteriol.">
        <title>Whole-genome comparison of Mycobacterium tuberculosis clinical and laboratory strains.</title>
        <authorList>
            <person name="Fleischmann R.D."/>
            <person name="Alland D."/>
            <person name="Eisen J.A."/>
            <person name="Carpenter L."/>
            <person name="White O."/>
            <person name="Peterson J.D."/>
            <person name="DeBoy R.T."/>
            <person name="Dodson R.J."/>
            <person name="Gwinn M.L."/>
            <person name="Haft D.H."/>
            <person name="Hickey E.K."/>
            <person name="Kolonay J.F."/>
            <person name="Nelson W.C."/>
            <person name="Umayam L.A."/>
            <person name="Ermolaeva M.D."/>
            <person name="Salzberg S.L."/>
            <person name="Delcher A."/>
            <person name="Utterback T.R."/>
            <person name="Weidman J.F."/>
            <person name="Khouri H.M."/>
            <person name="Gill J."/>
            <person name="Mikula A."/>
            <person name="Bishai W."/>
            <person name="Jacobs W.R. Jr."/>
            <person name="Venter J.C."/>
            <person name="Fraser C.M."/>
        </authorList>
    </citation>
    <scope>NUCLEOTIDE SEQUENCE [LARGE SCALE GENOMIC DNA]</scope>
    <source>
        <strain>CDC 1551 / Oshkosh</strain>
    </source>
</reference>
<reference key="2">
    <citation type="journal article" date="2006" name="Mol. Microbiol.">
        <title>M. tuberculosis Rv2252 encodes a diacylglycerol kinase involved in the biosynthesis of phosphatidylinositol mannosides (PIMs).</title>
        <authorList>
            <person name="Owens R.M."/>
            <person name="Hsu F.F."/>
            <person name="VanderVen B.C."/>
            <person name="Purdy G.E."/>
            <person name="Hesteande E."/>
            <person name="Giannakas P."/>
            <person name="Sacchettini J.C."/>
            <person name="McKinney J.D."/>
            <person name="Hill P.J."/>
            <person name="Belisle J.T."/>
            <person name="Butcher B.A."/>
            <person name="Pethe K."/>
            <person name="Russell D.G."/>
        </authorList>
    </citation>
    <scope>FUNCTION</scope>
    <scope>CATALYTIC ACTIVITY</scope>
    <scope>SUBSTRATE SPECIFICITY</scope>
    <scope>SUBCELLULAR LOCATION</scope>
    <scope>DISRUPTION PHENOTYPE</scope>
    <source>
        <strain>CDC 1551 / Oshkosh</strain>
    </source>
</reference>
<feature type="chain" id="PRO_0000427024" description="Diacylglycerol kinase">
    <location>
        <begin position="1"/>
        <end position="309"/>
    </location>
</feature>
<feature type="domain" description="DAGKc" evidence="2">
    <location>
        <begin position="9"/>
        <end position="140"/>
    </location>
</feature>
<feature type="active site" description="Proton acceptor" evidence="1">
    <location>
        <position position="285"/>
    </location>
</feature>
<feature type="binding site" evidence="2">
    <location>
        <begin position="19"/>
        <end position="23"/>
    </location>
    <ligand>
        <name>ATP</name>
        <dbReference type="ChEBI" id="CHEBI:30616"/>
    </ligand>
</feature>
<feature type="binding site" evidence="2">
    <location>
        <begin position="76"/>
        <end position="82"/>
    </location>
    <ligand>
        <name>ATP</name>
        <dbReference type="ChEBI" id="CHEBI:30616"/>
    </ligand>
</feature>
<feature type="binding site" evidence="2">
    <location>
        <position position="101"/>
    </location>
    <ligand>
        <name>ATP</name>
        <dbReference type="ChEBI" id="CHEBI:30616"/>
    </ligand>
</feature>
<feature type="binding site" evidence="1">
    <location>
        <position position="226"/>
    </location>
    <ligand>
        <name>Mg(2+)</name>
        <dbReference type="ChEBI" id="CHEBI:18420"/>
    </ligand>
</feature>
<feature type="binding site" evidence="1">
    <location>
        <position position="229"/>
    </location>
    <ligand>
        <name>Mg(2+)</name>
        <dbReference type="ChEBI" id="CHEBI:18420"/>
    </ligand>
</feature>
<feature type="binding site" evidence="1">
    <location>
        <position position="231"/>
    </location>
    <ligand>
        <name>Mg(2+)</name>
        <dbReference type="ChEBI" id="CHEBI:18420"/>
    </ligand>
</feature>
<proteinExistence type="evidence at protein level"/>
<protein>
    <recommendedName>
        <fullName evidence="4">Diacylglycerol kinase</fullName>
        <shortName evidence="5">DAG kinase</shortName>
        <shortName evidence="4">DAGK</shortName>
        <ecNumber evidence="3">2.7.1.107</ecNumber>
    </recommendedName>
</protein>
<dbReference type="EC" id="2.7.1.107" evidence="3"/>
<dbReference type="EMBL" id="AE000516">
    <property type="status" value="NOT_ANNOTATED_CDS"/>
    <property type="molecule type" value="Genomic_DNA"/>
</dbReference>
<dbReference type="PIR" id="H70861">
    <property type="entry name" value="H70861"/>
</dbReference>
<dbReference type="RefSeq" id="WP_003411603.1">
    <property type="nucleotide sequence ID" value="NZ_KK341227.1"/>
</dbReference>
<dbReference type="SMR" id="P9WP28"/>
<dbReference type="PATRIC" id="fig|83331.31.peg.2489"/>
<dbReference type="Proteomes" id="UP000001020">
    <property type="component" value="Chromosome"/>
</dbReference>
<dbReference type="GO" id="GO:0005576">
    <property type="term" value="C:extracellular region"/>
    <property type="evidence" value="ECO:0007669"/>
    <property type="project" value="UniProtKB-KW"/>
</dbReference>
<dbReference type="GO" id="GO:0005886">
    <property type="term" value="C:plasma membrane"/>
    <property type="evidence" value="ECO:0007669"/>
    <property type="project" value="TreeGrafter"/>
</dbReference>
<dbReference type="GO" id="GO:0005524">
    <property type="term" value="F:ATP binding"/>
    <property type="evidence" value="ECO:0007669"/>
    <property type="project" value="UniProtKB-KW"/>
</dbReference>
<dbReference type="GO" id="GO:0004143">
    <property type="term" value="F:ATP-dependent diacylglycerol kinase activity"/>
    <property type="evidence" value="ECO:0007669"/>
    <property type="project" value="UniProtKB-EC"/>
</dbReference>
<dbReference type="GO" id="GO:0046872">
    <property type="term" value="F:metal ion binding"/>
    <property type="evidence" value="ECO:0007669"/>
    <property type="project" value="UniProtKB-KW"/>
</dbReference>
<dbReference type="GO" id="GO:0008654">
    <property type="term" value="P:phospholipid biosynthetic process"/>
    <property type="evidence" value="ECO:0007669"/>
    <property type="project" value="UniProtKB-KW"/>
</dbReference>
<dbReference type="Gene3D" id="2.60.200.40">
    <property type="match status" value="1"/>
</dbReference>
<dbReference type="Gene3D" id="3.40.50.10330">
    <property type="entry name" value="Probable inorganic polyphosphate/atp-NAD kinase, domain 1"/>
    <property type="match status" value="1"/>
</dbReference>
<dbReference type="InterPro" id="IPR017438">
    <property type="entry name" value="ATP-NAD_kinase_N"/>
</dbReference>
<dbReference type="InterPro" id="IPR005218">
    <property type="entry name" value="Diacylglycerol/lipid_kinase"/>
</dbReference>
<dbReference type="InterPro" id="IPR001206">
    <property type="entry name" value="Diacylglycerol_kinase_cat_dom"/>
</dbReference>
<dbReference type="InterPro" id="IPR050187">
    <property type="entry name" value="Lipid_Phosphate_FormReg"/>
</dbReference>
<dbReference type="InterPro" id="IPR016064">
    <property type="entry name" value="NAD/diacylglycerol_kinase_sf"/>
</dbReference>
<dbReference type="InterPro" id="IPR045540">
    <property type="entry name" value="YegS/DAGK_C"/>
</dbReference>
<dbReference type="NCBIfam" id="NF008882">
    <property type="entry name" value="PRK11914.1"/>
    <property type="match status" value="1"/>
</dbReference>
<dbReference type="NCBIfam" id="TIGR00147">
    <property type="entry name" value="YegS/Rv2252/BmrU family lipid kinase"/>
    <property type="match status" value="1"/>
</dbReference>
<dbReference type="PANTHER" id="PTHR12358:SF106">
    <property type="entry name" value="LIPID KINASE YEGS"/>
    <property type="match status" value="1"/>
</dbReference>
<dbReference type="PANTHER" id="PTHR12358">
    <property type="entry name" value="SPHINGOSINE KINASE"/>
    <property type="match status" value="1"/>
</dbReference>
<dbReference type="Pfam" id="PF00781">
    <property type="entry name" value="DAGK_cat"/>
    <property type="match status" value="1"/>
</dbReference>
<dbReference type="Pfam" id="PF19279">
    <property type="entry name" value="YegS_C"/>
    <property type="match status" value="1"/>
</dbReference>
<dbReference type="SMART" id="SM00046">
    <property type="entry name" value="DAGKc"/>
    <property type="match status" value="1"/>
</dbReference>
<dbReference type="SUPFAM" id="SSF111331">
    <property type="entry name" value="NAD kinase/diacylglycerol kinase-like"/>
    <property type="match status" value="1"/>
</dbReference>
<dbReference type="PROSITE" id="PS50146">
    <property type="entry name" value="DAGK"/>
    <property type="match status" value="1"/>
</dbReference>
<name>DAGK_MYCTO</name>
<keyword id="KW-0067">ATP-binding</keyword>
<keyword id="KW-0134">Cell wall</keyword>
<keyword id="KW-0418">Kinase</keyword>
<keyword id="KW-0444">Lipid biosynthesis</keyword>
<keyword id="KW-0443">Lipid metabolism</keyword>
<keyword id="KW-0460">Magnesium</keyword>
<keyword id="KW-0479">Metal-binding</keyword>
<keyword id="KW-0547">Nucleotide-binding</keyword>
<keyword id="KW-0594">Phospholipid biosynthesis</keyword>
<keyword id="KW-1208">Phospholipid metabolism</keyword>
<keyword id="KW-1185">Reference proteome</keyword>
<keyword id="KW-0964">Secreted</keyword>
<keyword id="KW-0808">Transferase</keyword>
<evidence type="ECO:0000250" key="1">
    <source>
        <dbReference type="UniProtKB" id="Q6GFF9"/>
    </source>
</evidence>
<evidence type="ECO:0000255" key="2">
    <source>
        <dbReference type="PROSITE-ProRule" id="PRU00783"/>
    </source>
</evidence>
<evidence type="ECO:0000269" key="3">
    <source>
    </source>
</evidence>
<evidence type="ECO:0000303" key="4">
    <source>
    </source>
</evidence>
<evidence type="ECO:0000305" key="5"/>
<evidence type="ECO:0000305" key="6">
    <source>
    </source>
</evidence>